<comment type="catalytic activity">
    <reaction>
        <text>UDP-alpha-D-glucose = UDP-alpha-D-galactose</text>
        <dbReference type="Rhea" id="RHEA:22168"/>
        <dbReference type="ChEBI" id="CHEBI:58885"/>
        <dbReference type="ChEBI" id="CHEBI:66914"/>
        <dbReference type="EC" id="5.1.3.2"/>
    </reaction>
</comment>
<comment type="cofactor">
    <cofactor evidence="1">
        <name>NAD(+)</name>
        <dbReference type="ChEBI" id="CHEBI:57540"/>
    </cofactor>
</comment>
<comment type="pathway">
    <text>Carbohydrate metabolism; galactose metabolism.</text>
</comment>
<comment type="similarity">
    <text evidence="2">Belongs to the NAD(P)-dependent epimerase/dehydratase family.</text>
</comment>
<reference key="1">
    <citation type="submission" date="1995-07" db="EMBL/GenBank/DDBJ databases">
        <title>Cloning and characterization of a UDP-galactose-4-epimerase ('galactowaldenase') and its expression in pea tissues.</title>
        <authorList>
            <person name="Slocum R.D."/>
            <person name="Lake M.R."/>
            <person name="Williamson C.L."/>
        </authorList>
    </citation>
    <scope>NUCLEOTIDE SEQUENCE [MRNA]</scope>
    <source>
        <strain>cv. Wando</strain>
    </source>
</reference>
<protein>
    <recommendedName>
        <fullName>UDP-glucose 4-epimerase</fullName>
        <ecNumber>5.1.3.2</ecNumber>
    </recommendedName>
    <alternativeName>
        <fullName>Galactowaldenase</fullName>
    </alternativeName>
    <alternativeName>
        <fullName>UDP-galactose 4-epimerase</fullName>
    </alternativeName>
</protein>
<gene>
    <name type="primary">GALE</name>
</gene>
<dbReference type="EC" id="5.1.3.2"/>
<dbReference type="EMBL" id="U31544">
    <property type="protein sequence ID" value="AAA86532.1"/>
    <property type="molecule type" value="mRNA"/>
</dbReference>
<dbReference type="PIR" id="T06526">
    <property type="entry name" value="T06526"/>
</dbReference>
<dbReference type="SMR" id="Q43070"/>
<dbReference type="UniPathway" id="UPA00214"/>
<dbReference type="GO" id="GO:0005829">
    <property type="term" value="C:cytosol"/>
    <property type="evidence" value="ECO:0007669"/>
    <property type="project" value="TreeGrafter"/>
</dbReference>
<dbReference type="GO" id="GO:0003978">
    <property type="term" value="F:UDP-glucose 4-epimerase activity"/>
    <property type="evidence" value="ECO:0007669"/>
    <property type="project" value="UniProtKB-EC"/>
</dbReference>
<dbReference type="GO" id="GO:0006012">
    <property type="term" value="P:galactose metabolic process"/>
    <property type="evidence" value="ECO:0007669"/>
    <property type="project" value="UniProtKB-UniPathway"/>
</dbReference>
<dbReference type="CDD" id="cd05247">
    <property type="entry name" value="UDP_G4E_1_SDR_e"/>
    <property type="match status" value="1"/>
</dbReference>
<dbReference type="FunFam" id="3.40.50.720:FF:000040">
    <property type="entry name" value="UDP-glucose 4-epimerase"/>
    <property type="match status" value="1"/>
</dbReference>
<dbReference type="FunFam" id="3.90.25.10:FF:000060">
    <property type="entry name" value="UDP-glucose 4-epimerase 4"/>
    <property type="match status" value="1"/>
</dbReference>
<dbReference type="Gene3D" id="3.40.50.720">
    <property type="entry name" value="NAD(P)-binding Rossmann-like Domain"/>
    <property type="match status" value="1"/>
</dbReference>
<dbReference type="Gene3D" id="3.90.25.10">
    <property type="entry name" value="UDP-galactose 4-epimerase, domain 1"/>
    <property type="match status" value="1"/>
</dbReference>
<dbReference type="InterPro" id="IPR016040">
    <property type="entry name" value="NAD(P)-bd_dom"/>
</dbReference>
<dbReference type="InterPro" id="IPR036291">
    <property type="entry name" value="NAD(P)-bd_dom_sf"/>
</dbReference>
<dbReference type="InterPro" id="IPR005886">
    <property type="entry name" value="UDP_G4E"/>
</dbReference>
<dbReference type="NCBIfam" id="TIGR01179">
    <property type="entry name" value="galE"/>
    <property type="match status" value="1"/>
</dbReference>
<dbReference type="NCBIfam" id="NF007956">
    <property type="entry name" value="PRK10675.1"/>
    <property type="match status" value="1"/>
</dbReference>
<dbReference type="PANTHER" id="PTHR43725:SF15">
    <property type="entry name" value="BIFUNCTIONAL UDP-GLUCOSE 4-EPIMERASE AND UDP-XYLOSE 4-EPIMERASE 1"/>
    <property type="match status" value="1"/>
</dbReference>
<dbReference type="PANTHER" id="PTHR43725">
    <property type="entry name" value="UDP-GLUCOSE 4-EPIMERASE"/>
    <property type="match status" value="1"/>
</dbReference>
<dbReference type="Pfam" id="PF16363">
    <property type="entry name" value="GDP_Man_Dehyd"/>
    <property type="match status" value="1"/>
</dbReference>
<dbReference type="SUPFAM" id="SSF51735">
    <property type="entry name" value="NAD(P)-binding Rossmann-fold domains"/>
    <property type="match status" value="1"/>
</dbReference>
<accession>Q43070</accession>
<proteinExistence type="evidence at transcript level"/>
<organism>
    <name type="scientific">Pisum sativum</name>
    <name type="common">Garden pea</name>
    <name type="synonym">Lathyrus oleraceus</name>
    <dbReference type="NCBI Taxonomy" id="3888"/>
    <lineage>
        <taxon>Eukaryota</taxon>
        <taxon>Viridiplantae</taxon>
        <taxon>Streptophyta</taxon>
        <taxon>Embryophyta</taxon>
        <taxon>Tracheophyta</taxon>
        <taxon>Spermatophyta</taxon>
        <taxon>Magnoliopsida</taxon>
        <taxon>eudicotyledons</taxon>
        <taxon>Gunneridae</taxon>
        <taxon>Pentapetalae</taxon>
        <taxon>rosids</taxon>
        <taxon>fabids</taxon>
        <taxon>Fabales</taxon>
        <taxon>Fabaceae</taxon>
        <taxon>Papilionoideae</taxon>
        <taxon>50 kb inversion clade</taxon>
        <taxon>NPAAA clade</taxon>
        <taxon>Hologalegina</taxon>
        <taxon>IRL clade</taxon>
        <taxon>Fabeae</taxon>
        <taxon>Pisum</taxon>
    </lineage>
</organism>
<keyword id="KW-0119">Carbohydrate metabolism</keyword>
<keyword id="KW-0299">Galactose metabolism</keyword>
<keyword id="KW-0413">Isomerase</keyword>
<keyword id="KW-0520">NAD</keyword>
<feature type="chain" id="PRO_0000183198" description="UDP-glucose 4-epimerase">
    <location>
        <begin position="1"/>
        <end position="350"/>
    </location>
</feature>
<feature type="active site" description="Proton acceptor" evidence="1">
    <location>
        <position position="157"/>
    </location>
</feature>
<feature type="binding site" evidence="1">
    <location>
        <begin position="7"/>
        <end position="38"/>
    </location>
    <ligand>
        <name>NAD(+)</name>
        <dbReference type="ChEBI" id="CHEBI:57540"/>
    </ligand>
</feature>
<feature type="binding site" evidence="1">
    <location>
        <position position="133"/>
    </location>
    <ligand>
        <name>substrate</name>
    </ligand>
</feature>
<sequence>MVASSQKILVTGSAGFIGTHTVVQLLNNGFNVSIIDNFDNSVMEAVERVREVVGSNLSQNLEFTLGDLRNKDDLEKLFSKSKFDAVIHFAGLKAVGESVENPRRYFDNNLVGTINLYEVMAKHNCKKMVFSSSATVYGQPEKIPCVEDFKLQAMNPYGRTKLFLEEIARDIQKAEPEWRIVLLRYFNPVGAHESGKLGEDPRGIPNNLMPYIQQVAVGRLPELNVYGHDYPTRDGSAIRDYIHVMDLADGHIAALRKLFTSENIGCTAYNLGTGRGSSVLEMVAAFEKASGKKIALKLCPRRPGDATEVYASTAKAEKELGWKAKYGVEEMCRDQWNWAKNNPWGYSGKP</sequence>
<evidence type="ECO:0000250" key="1"/>
<evidence type="ECO:0000305" key="2"/>
<name>GALE1_PEA</name>